<accession>Q9X2I1</accession>
<accession>G4FGR0</accession>
<proteinExistence type="evidence at protein level"/>
<name>ECFT_THEMA</name>
<organism>
    <name type="scientific">Thermotoga maritima (strain ATCC 43589 / DSM 3109 / JCM 10099 / NBRC 100826 / MSB8)</name>
    <dbReference type="NCBI Taxonomy" id="243274"/>
    <lineage>
        <taxon>Bacteria</taxon>
        <taxon>Thermotogati</taxon>
        <taxon>Thermotogota</taxon>
        <taxon>Thermotogae</taxon>
        <taxon>Thermotogales</taxon>
        <taxon>Thermotogaceae</taxon>
        <taxon>Thermotoga</taxon>
    </lineage>
</organism>
<keyword id="KW-0997">Cell inner membrane</keyword>
<keyword id="KW-1003">Cell membrane</keyword>
<keyword id="KW-0472">Membrane</keyword>
<keyword id="KW-1185">Reference proteome</keyword>
<keyword id="KW-0812">Transmembrane</keyword>
<keyword id="KW-1133">Transmembrane helix</keyword>
<keyword id="KW-0813">Transport</keyword>
<dbReference type="EMBL" id="AE000512">
    <property type="protein sequence ID" value="AAD36930.1"/>
    <property type="molecule type" value="Genomic_DNA"/>
</dbReference>
<dbReference type="PIR" id="E72202">
    <property type="entry name" value="E72202"/>
</dbReference>
<dbReference type="RefSeq" id="NP_229664.1">
    <property type="nucleotide sequence ID" value="NC_000853.1"/>
</dbReference>
<dbReference type="RefSeq" id="WP_004082419.1">
    <property type="nucleotide sequence ID" value="NZ_CP011107.1"/>
</dbReference>
<dbReference type="SMR" id="Q9X2I1"/>
<dbReference type="FunCoup" id="Q9X2I1">
    <property type="interactions" value="233"/>
</dbReference>
<dbReference type="STRING" id="243274.TM_1868"/>
<dbReference type="TCDB" id="3.A.1.25.5">
    <property type="family name" value="the atp-binding cassette (abc) superfamily"/>
</dbReference>
<dbReference type="PaxDb" id="243274-THEMA_04830"/>
<dbReference type="DNASU" id="897358"/>
<dbReference type="EnsemblBacteria" id="AAD36930">
    <property type="protein sequence ID" value="AAD36930"/>
    <property type="gene ID" value="TM_1868"/>
</dbReference>
<dbReference type="KEGG" id="tma:TM1868"/>
<dbReference type="KEGG" id="tmi:THEMA_04830"/>
<dbReference type="KEGG" id="tmm:Tmari_1883"/>
<dbReference type="KEGG" id="tmw:THMA_1918"/>
<dbReference type="eggNOG" id="COG0619">
    <property type="taxonomic scope" value="Bacteria"/>
</dbReference>
<dbReference type="InParanoid" id="Q9X2I1"/>
<dbReference type="OrthoDB" id="8075495at2"/>
<dbReference type="Proteomes" id="UP000008183">
    <property type="component" value="Chromosome"/>
</dbReference>
<dbReference type="GO" id="GO:0005886">
    <property type="term" value="C:plasma membrane"/>
    <property type="evidence" value="ECO:0000314"/>
    <property type="project" value="UniProtKB"/>
</dbReference>
<dbReference type="GO" id="GO:0032217">
    <property type="term" value="F:riboflavin transmembrane transporter activity"/>
    <property type="evidence" value="ECO:0000316"/>
    <property type="project" value="UniProtKB"/>
</dbReference>
<dbReference type="GO" id="GO:0032218">
    <property type="term" value="P:riboflavin transport"/>
    <property type="evidence" value="ECO:0000316"/>
    <property type="project" value="UniProtKB"/>
</dbReference>
<dbReference type="CDD" id="cd16914">
    <property type="entry name" value="EcfT"/>
    <property type="match status" value="1"/>
</dbReference>
<dbReference type="InterPro" id="IPR003339">
    <property type="entry name" value="ABC/ECF_trnsptr_transmembrane"/>
</dbReference>
<dbReference type="PANTHER" id="PTHR33514">
    <property type="entry name" value="PROTEIN ABCI12, CHLOROPLASTIC"/>
    <property type="match status" value="1"/>
</dbReference>
<dbReference type="PANTHER" id="PTHR33514:SF13">
    <property type="entry name" value="PROTEIN ABCI12, CHLOROPLASTIC"/>
    <property type="match status" value="1"/>
</dbReference>
<dbReference type="Pfam" id="PF02361">
    <property type="entry name" value="CbiQ"/>
    <property type="match status" value="1"/>
</dbReference>
<comment type="function">
    <text evidence="2 3">Transmembrane (T) component of an energy-coupling factor (ECF) ABC-transporter complex. Unlike classic ABC transporters this ECF transporter provides the energy necessary to transport a number of different substrates (Probable). Expression of the complex plus RibU in E.coli allows riboflavin uptake; uptake does not occur in the absence of RibU or the EcfA1A2T complex.</text>
</comment>
<comment type="subunit">
    <text evidence="2">Forms a stable energy-coupling factor (ECF) transporter complex composed of 2 membrane-embedded substrate-binding proteins (S component, RibU, BioY), 2 ATP-binding proteins (A component) and 2 transmembrane proteins (T component) upon coexpression in E.coli. A stable subcomplex with both A and T components are also isolated. This complex interacts with at least 2 substrate-specific components, BioY and RibU.</text>
</comment>
<comment type="subcellular location">
    <subcellularLocation>
        <location evidence="4">Cell inner membrane</location>
        <topology evidence="4">Multi-pass membrane protein</topology>
    </subcellularLocation>
</comment>
<comment type="similarity">
    <text evidence="3">Belongs to the energy-coupling factor EcfT family.</text>
</comment>
<protein>
    <recommendedName>
        <fullName>Energy-coupling factor transporter transmembrane protein EcfT</fullName>
        <shortName>ECF transporter T component EcfT</shortName>
    </recommendedName>
</protein>
<sequence length="271" mass="30641">MRLPTVLIGRYIPVDSIVHRLDPRAKLLGMIFLISAVLIVPNLLFYLVPGLAIFLLMFLSRTGFKIYLAGLRSLWFFLVFAVLVQFFSSSEGEKIFWMITDRAIWSAVYIMLRLVLIILLAENFSATTPPLLSARAIESIFSTFGARKIGHEIGMVMTIAMRFVPVLALEADRILKAQIARGANFERGKFFDRIRALVVIIVPLLISALRKAEELAVAMEARLYTGEPPKTRFKDIKWKPMDTLYVLLTAGVLVLVLFGRYFVDGVFQYGS</sequence>
<gene>
    <name type="primary">ecfT</name>
    <name type="ordered locus">TM_1868</name>
</gene>
<feature type="chain" id="PRO_0000422260" description="Energy-coupling factor transporter transmembrane protein EcfT">
    <location>
        <begin position="1"/>
        <end position="271"/>
    </location>
</feature>
<feature type="transmembrane region" description="Helical" evidence="1">
    <location>
        <begin position="38"/>
        <end position="58"/>
    </location>
</feature>
<feature type="transmembrane region" description="Helical" evidence="1">
    <location>
        <begin position="66"/>
        <end position="86"/>
    </location>
</feature>
<feature type="transmembrane region" description="Helical" evidence="1">
    <location>
        <begin position="104"/>
        <end position="124"/>
    </location>
</feature>
<feature type="transmembrane region" description="Helical" evidence="1">
    <location>
        <begin position="149"/>
        <end position="169"/>
    </location>
</feature>
<feature type="transmembrane region" description="Helical" evidence="1">
    <location>
        <begin position="197"/>
        <end position="217"/>
    </location>
</feature>
<feature type="transmembrane region" description="Helical" evidence="1">
    <location>
        <begin position="243"/>
        <end position="263"/>
    </location>
</feature>
<reference key="1">
    <citation type="journal article" date="1999" name="Nature">
        <title>Evidence for lateral gene transfer between Archaea and Bacteria from genome sequence of Thermotoga maritima.</title>
        <authorList>
            <person name="Nelson K.E."/>
            <person name="Clayton R.A."/>
            <person name="Gill S.R."/>
            <person name="Gwinn M.L."/>
            <person name="Dodson R.J."/>
            <person name="Haft D.H."/>
            <person name="Hickey E.K."/>
            <person name="Peterson J.D."/>
            <person name="Nelson W.C."/>
            <person name="Ketchum K.A."/>
            <person name="McDonald L.A."/>
            <person name="Utterback T.R."/>
            <person name="Malek J.A."/>
            <person name="Linher K.D."/>
            <person name="Garrett M.M."/>
            <person name="Stewart A.M."/>
            <person name="Cotton M.D."/>
            <person name="Pratt M.S."/>
            <person name="Phillips C.A."/>
            <person name="Richardson D.L."/>
            <person name="Heidelberg J.F."/>
            <person name="Sutton G.G."/>
            <person name="Fleischmann R.D."/>
            <person name="Eisen J.A."/>
            <person name="White O."/>
            <person name="Salzberg S.L."/>
            <person name="Smith H.O."/>
            <person name="Venter J.C."/>
            <person name="Fraser C.M."/>
        </authorList>
    </citation>
    <scope>NUCLEOTIDE SEQUENCE [LARGE SCALE GENOMIC DNA]</scope>
    <source>
        <strain>ATCC 43589 / DSM 3109 / JCM 10099 / NBRC 100826 / MSB8</strain>
    </source>
</reference>
<reference key="2">
    <citation type="journal article" date="2013" name="Proc. Natl. Acad. Sci. U.S.A.">
        <title>Assembly and mechanism of a group II ECF transporter.</title>
        <authorList>
            <person name="Karpowich N.K."/>
            <person name="Wang D.N."/>
        </authorList>
    </citation>
    <scope>FUNCTION AS A TRANSPORT COMPONENT</scope>
    <scope>SUBUNIT</scope>
    <scope>SUBCELLULAR LOCATION</scope>
    <scope>EXPRESSION IN E.COLI</scope>
    <source>
        <strain>ATCC 43589 / DSM 3109 / JCM 10099 / NBRC 100826 / MSB8</strain>
    </source>
</reference>
<evidence type="ECO:0000255" key="1"/>
<evidence type="ECO:0000269" key="2">
    <source>
    </source>
</evidence>
<evidence type="ECO:0000305" key="3"/>
<evidence type="ECO:0000305" key="4">
    <source>
    </source>
</evidence>